<proteinExistence type="inferred from homology"/>
<accession>D9U2A8</accession>
<dbReference type="EMBL" id="EU163855">
    <property type="protein sequence ID" value="ABY26664.1"/>
    <property type="molecule type" value="mRNA"/>
</dbReference>
<dbReference type="SMR" id="D9U2A8"/>
<dbReference type="GO" id="GO:0005576">
    <property type="term" value="C:extracellular region"/>
    <property type="evidence" value="ECO:0007669"/>
    <property type="project" value="UniProtKB-SubCell"/>
</dbReference>
<dbReference type="GO" id="GO:0008200">
    <property type="term" value="F:ion channel inhibitor activity"/>
    <property type="evidence" value="ECO:0007669"/>
    <property type="project" value="InterPro"/>
</dbReference>
<dbReference type="GO" id="GO:0015459">
    <property type="term" value="F:potassium channel regulator activity"/>
    <property type="evidence" value="ECO:0007669"/>
    <property type="project" value="UniProtKB-KW"/>
</dbReference>
<dbReference type="GO" id="GO:0090729">
    <property type="term" value="F:toxin activity"/>
    <property type="evidence" value="ECO:0007669"/>
    <property type="project" value="UniProtKB-KW"/>
</dbReference>
<dbReference type="Gene3D" id="3.30.30.10">
    <property type="entry name" value="Knottin, scorpion toxin-like"/>
    <property type="match status" value="1"/>
</dbReference>
<dbReference type="InterPro" id="IPR036574">
    <property type="entry name" value="Scorpion_toxin-like_sf"/>
</dbReference>
<dbReference type="InterPro" id="IPR001947">
    <property type="entry name" value="Scorpion_toxinS_K_inh"/>
</dbReference>
<dbReference type="Pfam" id="PF00451">
    <property type="entry name" value="Toxin_2"/>
    <property type="match status" value="1"/>
</dbReference>
<dbReference type="PRINTS" id="PR00286">
    <property type="entry name" value="CHARYBDTOXIN"/>
</dbReference>
<dbReference type="SUPFAM" id="SSF57095">
    <property type="entry name" value="Scorpion toxin-like"/>
    <property type="match status" value="1"/>
</dbReference>
<dbReference type="PROSITE" id="PS01138">
    <property type="entry name" value="SCORP_SHORT_TOXIN"/>
    <property type="match status" value="1"/>
</dbReference>
<feature type="signal peptide" evidence="5">
    <location>
        <begin position="1"/>
        <end position="22"/>
    </location>
</feature>
<feature type="chain" id="PRO_0000403829" description="Potassium channel toxin alpha-KTx 15.9">
    <location>
        <begin position="23"/>
        <end position="60"/>
    </location>
</feature>
<feature type="disulfide bond" evidence="4">
    <location>
        <begin position="30"/>
        <end position="51"/>
    </location>
</feature>
<feature type="disulfide bond" evidence="4">
    <location>
        <begin position="36"/>
        <end position="56"/>
    </location>
</feature>
<feature type="disulfide bond" evidence="4">
    <location>
        <begin position="40"/>
        <end position="58"/>
    </location>
</feature>
<name>KA159_LYCMC</name>
<sequence>MKIFLPVLVMLILCSMCLLTEGQVSTNKKCSNTSQCYKTCEKVVGVAAGKCMNGKCICYP</sequence>
<keyword id="KW-1015">Disulfide bond</keyword>
<keyword id="KW-0872">Ion channel impairing toxin</keyword>
<keyword id="KW-0528">Neurotoxin</keyword>
<keyword id="KW-0632">Potassium channel impairing toxin</keyword>
<keyword id="KW-0964">Secreted</keyword>
<keyword id="KW-0732">Signal</keyword>
<keyword id="KW-0800">Toxin</keyword>
<organism>
    <name type="scientific">Lychas mucronatus</name>
    <name type="common">Chinese swimming scorpion</name>
    <dbReference type="NCBI Taxonomy" id="172552"/>
    <lineage>
        <taxon>Eukaryota</taxon>
        <taxon>Metazoa</taxon>
        <taxon>Ecdysozoa</taxon>
        <taxon>Arthropoda</taxon>
        <taxon>Chelicerata</taxon>
        <taxon>Arachnida</taxon>
        <taxon>Scorpiones</taxon>
        <taxon>Buthida</taxon>
        <taxon>Buthoidea</taxon>
        <taxon>Buthidae</taxon>
        <taxon>Lychas</taxon>
    </lineage>
</organism>
<evidence type="ECO:0000250" key="1">
    <source>
        <dbReference type="UniProtKB" id="P60208"/>
    </source>
</evidence>
<evidence type="ECO:0000250" key="2">
    <source>
        <dbReference type="UniProtKB" id="P84777"/>
    </source>
</evidence>
<evidence type="ECO:0000250" key="3">
    <source>
        <dbReference type="UniProtKB" id="Q867F4"/>
    </source>
</evidence>
<evidence type="ECO:0000250" key="4">
    <source>
        <dbReference type="UniProtKB" id="Q86BX0"/>
    </source>
</evidence>
<evidence type="ECO:0000255" key="5"/>
<evidence type="ECO:0000269" key="6">
    <source>
    </source>
</evidence>
<evidence type="ECO:0000305" key="7"/>
<evidence type="ECO:0000305" key="8">
    <source>
    </source>
</evidence>
<evidence type="ECO:0000312" key="9">
    <source>
        <dbReference type="EMBL" id="ABY26664.1"/>
    </source>
</evidence>
<reference key="1">
    <citation type="journal article" date="2010" name="BMC Genomics">
        <title>Comparative venom gland transcriptome analysis of the scorpion Lychas mucronatus reveals intraspecific toxic gene diversity and new venomous components.</title>
        <authorList>
            <person name="Zhao R."/>
            <person name="Ma Y."/>
            <person name="He Y."/>
            <person name="Di Z."/>
            <person name="Wu Y.-L."/>
            <person name="Cao Z.-J."/>
            <person name="Li W.-X."/>
        </authorList>
    </citation>
    <scope>NUCLEOTIDE SEQUENCE [MRNA]</scope>
    <source>
        <strain>Hainan</strain>
        <tissue>Venom gland</tissue>
    </source>
</reference>
<reference key="2">
    <citation type="journal article" date="2018" name="Nat. Struct. Mol. Biol.">
        <title>Screening, large-scale production and structure-based classification of cystine-dense peptides.</title>
        <authorList>
            <person name="Correnti C.E."/>
            <person name="Gewe M.M."/>
            <person name="Mehlin C."/>
            <person name="Bandaranayake A.D."/>
            <person name="Johnsen W.A."/>
            <person name="Rupert P.B."/>
            <person name="Brusniak M.Y."/>
            <person name="Clarke M."/>
            <person name="Burke S.E."/>
            <person name="De Van Der Schueren W."/>
            <person name="Pilat K."/>
            <person name="Turnbaugh S.M."/>
            <person name="May D."/>
            <person name="Watson A."/>
            <person name="Chan M.K."/>
            <person name="Bahl C.D."/>
            <person name="Olson J.M."/>
            <person name="Strong R.K."/>
        </authorList>
    </citation>
    <scope>FUNCTION</scope>
    <scope>SYNTHESIS OF 23-60</scope>
</reference>
<protein>
    <recommendedName>
        <fullName>Potassium channel toxin alpha-KTx 15.9</fullName>
    </recommendedName>
    <alternativeName>
        <fullName evidence="9">Neurotoxin KTx9</fullName>
    </alternativeName>
</protein>
<comment type="function">
    <text evidence="1 3 6">Blocker of A-type voltage-gated potassium channels of cerebellar granular cells. May also inhibit Kv4/KCND when coexpressed with DPP6 or DPP10. The occlusion of the outer entry of the K(+) conducting pore is partially reversible and affects both open and closed channels. It shares the same target in rat brain than BmTX3 (AC Q8I0L5) and AmmTX3 (AC P60208). Has been shown to weakly inhibit TRPV1 channels (PubMed:29483648).</text>
</comment>
<comment type="subcellular location">
    <subcellularLocation>
        <location evidence="8">Secreted</location>
    </subcellularLocation>
</comment>
<comment type="tissue specificity">
    <text evidence="8">Expressed by the venom gland.</text>
</comment>
<comment type="domain">
    <text evidence="2">Has the structural arrangement of an alpha-helix connected to a beta-sheet by disulfide bonds (CSalpha/beta).</text>
</comment>
<comment type="similarity">
    <text evidence="7">Belongs to the short scorpion toxin superfamily. Potassium channel inhibitor family. Alpha-KTx 15 subfamily.</text>
</comment>